<organism>
    <name type="scientific">Treponema denticola (strain ATCC 35405 / DSM 14222 / CIP 103919 / JCM 8153 / KCTC 15104)</name>
    <dbReference type="NCBI Taxonomy" id="243275"/>
    <lineage>
        <taxon>Bacteria</taxon>
        <taxon>Pseudomonadati</taxon>
        <taxon>Spirochaetota</taxon>
        <taxon>Spirochaetia</taxon>
        <taxon>Spirochaetales</taxon>
        <taxon>Treponemataceae</taxon>
        <taxon>Treponema</taxon>
    </lineage>
</organism>
<name>RS20_TREDE</name>
<comment type="function">
    <text evidence="1">Binds directly to 16S ribosomal RNA.</text>
</comment>
<comment type="similarity">
    <text evidence="1">Belongs to the bacterial ribosomal protein bS20 family.</text>
</comment>
<gene>
    <name evidence="1" type="primary">rpsT</name>
    <name type="ordered locus">TDE_1710</name>
</gene>
<keyword id="KW-1185">Reference proteome</keyword>
<keyword id="KW-0687">Ribonucleoprotein</keyword>
<keyword id="KW-0689">Ribosomal protein</keyword>
<keyword id="KW-0694">RNA-binding</keyword>
<keyword id="KW-0699">rRNA-binding</keyword>
<protein>
    <recommendedName>
        <fullName evidence="1">Small ribosomal subunit protein bS20</fullName>
    </recommendedName>
    <alternativeName>
        <fullName evidence="3">30S ribosomal protein S20</fullName>
    </alternativeName>
</protein>
<accession>Q73M02</accession>
<reference key="1">
    <citation type="journal article" date="2004" name="Proc. Natl. Acad. Sci. U.S.A.">
        <title>Comparison of the genome of the oral pathogen Treponema denticola with other spirochete genomes.</title>
        <authorList>
            <person name="Seshadri R."/>
            <person name="Myers G.S.A."/>
            <person name="Tettelin H."/>
            <person name="Eisen J.A."/>
            <person name="Heidelberg J.F."/>
            <person name="Dodson R.J."/>
            <person name="Davidsen T.M."/>
            <person name="DeBoy R.T."/>
            <person name="Fouts D.E."/>
            <person name="Haft D.H."/>
            <person name="Selengut J."/>
            <person name="Ren Q."/>
            <person name="Brinkac L.M."/>
            <person name="Madupu R."/>
            <person name="Kolonay J.F."/>
            <person name="Durkin S.A."/>
            <person name="Daugherty S.C."/>
            <person name="Shetty J."/>
            <person name="Shvartsbeyn A."/>
            <person name="Gebregeorgis E."/>
            <person name="Geer K."/>
            <person name="Tsegaye G."/>
            <person name="Malek J.A."/>
            <person name="Ayodeji B."/>
            <person name="Shatsman S."/>
            <person name="McLeod M.P."/>
            <person name="Smajs D."/>
            <person name="Howell J.K."/>
            <person name="Pal S."/>
            <person name="Amin A."/>
            <person name="Vashisth P."/>
            <person name="McNeill T.Z."/>
            <person name="Xiang Q."/>
            <person name="Sodergren E."/>
            <person name="Baca E."/>
            <person name="Weinstock G.M."/>
            <person name="Norris S.J."/>
            <person name="Fraser C.M."/>
            <person name="Paulsen I.T."/>
        </authorList>
    </citation>
    <scope>NUCLEOTIDE SEQUENCE [LARGE SCALE GENOMIC DNA]</scope>
    <source>
        <strain>ATCC 35405 / DSM 14222 / CIP 103919 / JCM 8153 / KCTC 15104</strain>
    </source>
</reference>
<feature type="chain" id="PRO_0000168052" description="Small ribosomal subunit protein bS20">
    <location>
        <begin position="1"/>
        <end position="89"/>
    </location>
</feature>
<feature type="region of interest" description="Disordered" evidence="2">
    <location>
        <begin position="1"/>
        <end position="30"/>
    </location>
</feature>
<feature type="compositionally biased region" description="Basic residues" evidence="2">
    <location>
        <begin position="1"/>
        <end position="10"/>
    </location>
</feature>
<feature type="compositionally biased region" description="Basic and acidic residues" evidence="2">
    <location>
        <begin position="11"/>
        <end position="30"/>
    </location>
</feature>
<dbReference type="EMBL" id="AE017226">
    <property type="protein sequence ID" value="AAS12225.1"/>
    <property type="molecule type" value="Genomic_DNA"/>
</dbReference>
<dbReference type="RefSeq" id="NP_972314.1">
    <property type="nucleotide sequence ID" value="NC_002967.9"/>
</dbReference>
<dbReference type="RefSeq" id="WP_002669392.1">
    <property type="nucleotide sequence ID" value="NC_002967.9"/>
</dbReference>
<dbReference type="SMR" id="Q73M02"/>
<dbReference type="STRING" id="243275.TDE_1710"/>
<dbReference type="PaxDb" id="243275-TDE_1710"/>
<dbReference type="GeneID" id="2740882"/>
<dbReference type="KEGG" id="tde:TDE_1710"/>
<dbReference type="PATRIC" id="fig|243275.7.peg.1635"/>
<dbReference type="eggNOG" id="COG0268">
    <property type="taxonomic scope" value="Bacteria"/>
</dbReference>
<dbReference type="HOGENOM" id="CLU_160655_3_1_12"/>
<dbReference type="OrthoDB" id="9808392at2"/>
<dbReference type="Proteomes" id="UP000008212">
    <property type="component" value="Chromosome"/>
</dbReference>
<dbReference type="GO" id="GO:0015935">
    <property type="term" value="C:small ribosomal subunit"/>
    <property type="evidence" value="ECO:0007669"/>
    <property type="project" value="TreeGrafter"/>
</dbReference>
<dbReference type="GO" id="GO:0070181">
    <property type="term" value="F:small ribosomal subunit rRNA binding"/>
    <property type="evidence" value="ECO:0007669"/>
    <property type="project" value="TreeGrafter"/>
</dbReference>
<dbReference type="GO" id="GO:0003735">
    <property type="term" value="F:structural constituent of ribosome"/>
    <property type="evidence" value="ECO:0007669"/>
    <property type="project" value="InterPro"/>
</dbReference>
<dbReference type="GO" id="GO:0006412">
    <property type="term" value="P:translation"/>
    <property type="evidence" value="ECO:0007669"/>
    <property type="project" value="UniProtKB-UniRule"/>
</dbReference>
<dbReference type="Gene3D" id="1.20.58.110">
    <property type="entry name" value="Ribosomal protein S20"/>
    <property type="match status" value="1"/>
</dbReference>
<dbReference type="HAMAP" id="MF_00500">
    <property type="entry name" value="Ribosomal_bS20"/>
    <property type="match status" value="1"/>
</dbReference>
<dbReference type="InterPro" id="IPR002583">
    <property type="entry name" value="Ribosomal_bS20"/>
</dbReference>
<dbReference type="InterPro" id="IPR036510">
    <property type="entry name" value="Ribosomal_bS20_sf"/>
</dbReference>
<dbReference type="NCBIfam" id="TIGR00029">
    <property type="entry name" value="S20"/>
    <property type="match status" value="1"/>
</dbReference>
<dbReference type="PANTHER" id="PTHR33398">
    <property type="entry name" value="30S RIBOSOMAL PROTEIN S20"/>
    <property type="match status" value="1"/>
</dbReference>
<dbReference type="PANTHER" id="PTHR33398:SF1">
    <property type="entry name" value="SMALL RIBOSOMAL SUBUNIT PROTEIN BS20C"/>
    <property type="match status" value="1"/>
</dbReference>
<dbReference type="Pfam" id="PF01649">
    <property type="entry name" value="Ribosomal_S20p"/>
    <property type="match status" value="1"/>
</dbReference>
<dbReference type="SUPFAM" id="SSF46992">
    <property type="entry name" value="Ribosomal protein S20"/>
    <property type="match status" value="1"/>
</dbReference>
<proteinExistence type="inferred from homology"/>
<sequence>MKNRSAIKRHNQSEVRRMRNRSAKSEVRTTARKYTEAVHAANAENAAALLRELSSQLDSAARKGILTKNSAARKKSRMQLLYNASFAAK</sequence>
<evidence type="ECO:0000255" key="1">
    <source>
        <dbReference type="HAMAP-Rule" id="MF_00500"/>
    </source>
</evidence>
<evidence type="ECO:0000256" key="2">
    <source>
        <dbReference type="SAM" id="MobiDB-lite"/>
    </source>
</evidence>
<evidence type="ECO:0000305" key="3"/>